<reference key="1">
    <citation type="journal article" date="2005" name="Nature">
        <title>The genome of the social amoeba Dictyostelium discoideum.</title>
        <authorList>
            <person name="Eichinger L."/>
            <person name="Pachebat J.A."/>
            <person name="Gloeckner G."/>
            <person name="Rajandream M.A."/>
            <person name="Sucgang R."/>
            <person name="Berriman M."/>
            <person name="Song J."/>
            <person name="Olsen R."/>
            <person name="Szafranski K."/>
            <person name="Xu Q."/>
            <person name="Tunggal B."/>
            <person name="Kummerfeld S."/>
            <person name="Madera M."/>
            <person name="Konfortov B.A."/>
            <person name="Rivero F."/>
            <person name="Bankier A.T."/>
            <person name="Lehmann R."/>
            <person name="Hamlin N."/>
            <person name="Davies R."/>
            <person name="Gaudet P."/>
            <person name="Fey P."/>
            <person name="Pilcher K."/>
            <person name="Chen G."/>
            <person name="Saunders D."/>
            <person name="Sodergren E.J."/>
            <person name="Davis P."/>
            <person name="Kerhornou A."/>
            <person name="Nie X."/>
            <person name="Hall N."/>
            <person name="Anjard C."/>
            <person name="Hemphill L."/>
            <person name="Bason N."/>
            <person name="Farbrother P."/>
            <person name="Desany B."/>
            <person name="Just E."/>
            <person name="Morio T."/>
            <person name="Rost R."/>
            <person name="Churcher C.M."/>
            <person name="Cooper J."/>
            <person name="Haydock S."/>
            <person name="van Driessche N."/>
            <person name="Cronin A."/>
            <person name="Goodhead I."/>
            <person name="Muzny D.M."/>
            <person name="Mourier T."/>
            <person name="Pain A."/>
            <person name="Lu M."/>
            <person name="Harper D."/>
            <person name="Lindsay R."/>
            <person name="Hauser H."/>
            <person name="James K.D."/>
            <person name="Quiles M."/>
            <person name="Madan Babu M."/>
            <person name="Saito T."/>
            <person name="Buchrieser C."/>
            <person name="Wardroper A."/>
            <person name="Felder M."/>
            <person name="Thangavelu M."/>
            <person name="Johnson D."/>
            <person name="Knights A."/>
            <person name="Loulseged H."/>
            <person name="Mungall K.L."/>
            <person name="Oliver K."/>
            <person name="Price C."/>
            <person name="Quail M.A."/>
            <person name="Urushihara H."/>
            <person name="Hernandez J."/>
            <person name="Rabbinowitsch E."/>
            <person name="Steffen D."/>
            <person name="Sanders M."/>
            <person name="Ma J."/>
            <person name="Kohara Y."/>
            <person name="Sharp S."/>
            <person name="Simmonds M.N."/>
            <person name="Spiegler S."/>
            <person name="Tivey A."/>
            <person name="Sugano S."/>
            <person name="White B."/>
            <person name="Walker D."/>
            <person name="Woodward J.R."/>
            <person name="Winckler T."/>
            <person name="Tanaka Y."/>
            <person name="Shaulsky G."/>
            <person name="Schleicher M."/>
            <person name="Weinstock G.M."/>
            <person name="Rosenthal A."/>
            <person name="Cox E.C."/>
            <person name="Chisholm R.L."/>
            <person name="Gibbs R.A."/>
            <person name="Loomis W.F."/>
            <person name="Platzer M."/>
            <person name="Kay R.R."/>
            <person name="Williams J.G."/>
            <person name="Dear P.H."/>
            <person name="Noegel A.A."/>
            <person name="Barrell B.G."/>
            <person name="Kuspa A."/>
        </authorList>
    </citation>
    <scope>NUCLEOTIDE SEQUENCE [LARGE SCALE GENOMIC DNA]</scope>
    <source>
        <strain>AX4</strain>
    </source>
</reference>
<gene>
    <name type="primary">arv1</name>
    <name type="ORF">DDB_G0290221</name>
</gene>
<evidence type="ECO:0000250" key="1"/>
<evidence type="ECO:0000255" key="2"/>
<evidence type="ECO:0000305" key="3"/>
<organism>
    <name type="scientific">Dictyostelium discoideum</name>
    <name type="common">Social amoeba</name>
    <dbReference type="NCBI Taxonomy" id="44689"/>
    <lineage>
        <taxon>Eukaryota</taxon>
        <taxon>Amoebozoa</taxon>
        <taxon>Evosea</taxon>
        <taxon>Eumycetozoa</taxon>
        <taxon>Dictyostelia</taxon>
        <taxon>Dictyosteliales</taxon>
        <taxon>Dictyosteliaceae</taxon>
        <taxon>Dictyostelium</taxon>
    </lineage>
</organism>
<protein>
    <recommendedName>
        <fullName>Protein arv1 homolog</fullName>
    </recommendedName>
</protein>
<keyword id="KW-0256">Endoplasmic reticulum</keyword>
<keyword id="KW-0325">Glycoprotein</keyword>
<keyword id="KW-0333">Golgi apparatus</keyword>
<keyword id="KW-0443">Lipid metabolism</keyword>
<keyword id="KW-0445">Lipid transport</keyword>
<keyword id="KW-0472">Membrane</keyword>
<keyword id="KW-1185">Reference proteome</keyword>
<keyword id="KW-0746">Sphingolipid metabolism</keyword>
<keyword id="KW-0812">Transmembrane</keyword>
<keyword id="KW-1133">Transmembrane helix</keyword>
<keyword id="KW-0813">Transport</keyword>
<feature type="chain" id="PRO_0000328234" description="Protein arv1 homolog">
    <location>
        <begin position="1"/>
        <end position="246"/>
    </location>
</feature>
<feature type="transmembrane region" description="Helical" evidence="2">
    <location>
        <begin position="73"/>
        <end position="93"/>
    </location>
</feature>
<feature type="transmembrane region" description="Helical" evidence="2">
    <location>
        <begin position="124"/>
        <end position="144"/>
    </location>
</feature>
<feature type="transmembrane region" description="Helical" evidence="2">
    <location>
        <begin position="162"/>
        <end position="182"/>
    </location>
</feature>
<feature type="transmembrane region" description="Helical" evidence="2">
    <location>
        <begin position="188"/>
        <end position="208"/>
    </location>
</feature>
<feature type="transmembrane region" description="Helical" evidence="2">
    <location>
        <begin position="216"/>
        <end position="236"/>
    </location>
</feature>
<feature type="glycosylation site" description="N-linked (GlcNAc...) asparagine" evidence="2">
    <location>
        <position position="34"/>
    </location>
</feature>
<sequence length="246" mass="29084">MICIECGRPVNDVYKEFGKAGSGNIRLTRCASCNQTADKYVEYDFIIVFLDLFLHKAQAYRHLLFNRQPYRDFGIPIQYIKVLVVYIFFESYIKWLRFKEYEQHPSGPAFYYIDWQDDVPYDRYWFIFVTAIAEFAVYILSIILSVRFIYESRYPIIKYNYLIMAIILSSFGKGFLVLMMIWDYPFSFGSILNIFVLSSNVVAIKVFLDTTTFKAIFFVVFGFLGKLLFQSIIYLFDASMLLHLSF</sequence>
<comment type="function">
    <text evidence="1">Mediator of sterol homeostasis involved in sterol uptake, trafficking and distribution into membranes. Also regulates the sphingolipid metabolism (By similarity).</text>
</comment>
<comment type="subcellular location">
    <subcellularLocation>
        <location evidence="1">Endoplasmic reticulum membrane</location>
        <topology evidence="1">Multi-pass membrane protein</topology>
    </subcellularLocation>
    <subcellularLocation>
        <location evidence="1">Golgi apparatus membrane</location>
        <topology evidence="1">Multi-pass membrane protein</topology>
    </subcellularLocation>
</comment>
<comment type="similarity">
    <text evidence="3">Belongs to the ARV1 family.</text>
</comment>
<accession>Q54GD9</accession>
<name>ARV1_DICDI</name>
<dbReference type="EMBL" id="AAFI02000161">
    <property type="protein sequence ID" value="EAL62332.1"/>
    <property type="molecule type" value="Genomic_DNA"/>
</dbReference>
<dbReference type="RefSeq" id="XP_635839.1">
    <property type="nucleotide sequence ID" value="XM_630747.1"/>
</dbReference>
<dbReference type="FunCoup" id="Q54GD9">
    <property type="interactions" value="364"/>
</dbReference>
<dbReference type="STRING" id="44689.Q54GD9"/>
<dbReference type="GlyCosmos" id="Q54GD9">
    <property type="glycosylation" value="1 site, No reported glycans"/>
</dbReference>
<dbReference type="GlyGen" id="Q54GD9">
    <property type="glycosylation" value="1 site"/>
</dbReference>
<dbReference type="PaxDb" id="44689-DDB0305173"/>
<dbReference type="EnsemblProtists" id="EAL62332">
    <property type="protein sequence ID" value="EAL62332"/>
    <property type="gene ID" value="DDB_G0290221"/>
</dbReference>
<dbReference type="GeneID" id="8627547"/>
<dbReference type="KEGG" id="ddi:DDB_G0290221"/>
<dbReference type="dictyBase" id="DDB_G0290221">
    <property type="gene designation" value="arv1"/>
</dbReference>
<dbReference type="VEuPathDB" id="AmoebaDB:DDB_G0290221"/>
<dbReference type="eggNOG" id="KOG3134">
    <property type="taxonomic scope" value="Eukaryota"/>
</dbReference>
<dbReference type="HOGENOM" id="CLU_057366_1_0_1"/>
<dbReference type="InParanoid" id="Q54GD9"/>
<dbReference type="OMA" id="MLDMNVK"/>
<dbReference type="PhylomeDB" id="Q54GD9"/>
<dbReference type="Reactome" id="R-DDI-191273">
    <property type="pathway name" value="Cholesterol biosynthesis"/>
</dbReference>
<dbReference type="PRO" id="PR:Q54GD9"/>
<dbReference type="Proteomes" id="UP000002195">
    <property type="component" value="Chromosome 5"/>
</dbReference>
<dbReference type="GO" id="GO:0032541">
    <property type="term" value="C:cortical endoplasmic reticulum"/>
    <property type="evidence" value="ECO:0000318"/>
    <property type="project" value="GO_Central"/>
</dbReference>
<dbReference type="GO" id="GO:0005789">
    <property type="term" value="C:endoplasmic reticulum membrane"/>
    <property type="evidence" value="ECO:0007669"/>
    <property type="project" value="UniProtKB-SubCell"/>
</dbReference>
<dbReference type="GO" id="GO:0005794">
    <property type="term" value="C:Golgi apparatus"/>
    <property type="evidence" value="ECO:0000318"/>
    <property type="project" value="GO_Central"/>
</dbReference>
<dbReference type="GO" id="GO:0000139">
    <property type="term" value="C:Golgi membrane"/>
    <property type="evidence" value="ECO:0007669"/>
    <property type="project" value="UniProtKB-SubCell"/>
</dbReference>
<dbReference type="GO" id="GO:0032366">
    <property type="term" value="P:intracellular sterol transport"/>
    <property type="evidence" value="ECO:0000318"/>
    <property type="project" value="GO_Central"/>
</dbReference>
<dbReference type="GO" id="GO:0097036">
    <property type="term" value="P:regulation of plasma membrane sterol distribution"/>
    <property type="evidence" value="ECO:0000318"/>
    <property type="project" value="GO_Central"/>
</dbReference>
<dbReference type="GO" id="GO:0006665">
    <property type="term" value="P:sphingolipid metabolic process"/>
    <property type="evidence" value="ECO:0000318"/>
    <property type="project" value="GO_Central"/>
</dbReference>
<dbReference type="GO" id="GO:0016125">
    <property type="term" value="P:sterol metabolic process"/>
    <property type="evidence" value="ECO:0000318"/>
    <property type="project" value="GO_Central"/>
</dbReference>
<dbReference type="InterPro" id="IPR007290">
    <property type="entry name" value="Arv1"/>
</dbReference>
<dbReference type="PANTHER" id="PTHR14467">
    <property type="entry name" value="ARV1"/>
    <property type="match status" value="1"/>
</dbReference>
<dbReference type="PANTHER" id="PTHR14467:SF0">
    <property type="entry name" value="PROTEIN ARV1"/>
    <property type="match status" value="1"/>
</dbReference>
<dbReference type="Pfam" id="PF04161">
    <property type="entry name" value="Arv1"/>
    <property type="match status" value="1"/>
</dbReference>
<proteinExistence type="inferred from homology"/>